<proteinExistence type="inferred from homology"/>
<reference key="1">
    <citation type="submission" date="2007-09" db="EMBL/GenBank/DDBJ databases">
        <title>Complete genome sequence of Rickettsia rickettsii.</title>
        <authorList>
            <person name="Madan A."/>
            <person name="Fahey J."/>
            <person name="Helton E."/>
            <person name="Ketteman M."/>
            <person name="Madan A."/>
            <person name="Rodrigues S."/>
            <person name="Sanchez A."/>
            <person name="Dasch G."/>
            <person name="Eremeeva M."/>
        </authorList>
    </citation>
    <scope>NUCLEOTIDE SEQUENCE [LARGE SCALE GENOMIC DNA]</scope>
    <source>
        <strain>Sheila Smith</strain>
    </source>
</reference>
<feature type="chain" id="PRO_1000046968" description="UPF0335 protein A1G_00885">
    <location>
        <begin position="1"/>
        <end position="78"/>
    </location>
</feature>
<dbReference type="EMBL" id="CP000848">
    <property type="protein sequence ID" value="ABV75759.1"/>
    <property type="molecule type" value="Genomic_DNA"/>
</dbReference>
<dbReference type="RefSeq" id="WP_012150371.1">
    <property type="nucleotide sequence ID" value="NZ_CP121767.1"/>
</dbReference>
<dbReference type="SMR" id="A8GQT4"/>
<dbReference type="GeneID" id="79936946"/>
<dbReference type="KEGG" id="rri:A1G_00885"/>
<dbReference type="HOGENOM" id="CLU_158651_4_0_5"/>
<dbReference type="Proteomes" id="UP000006832">
    <property type="component" value="Chromosome"/>
</dbReference>
<dbReference type="GO" id="GO:0003677">
    <property type="term" value="F:DNA binding"/>
    <property type="evidence" value="ECO:0007669"/>
    <property type="project" value="InterPro"/>
</dbReference>
<dbReference type="HAMAP" id="MF_00797">
    <property type="entry name" value="UPF0335"/>
    <property type="match status" value="1"/>
</dbReference>
<dbReference type="InterPro" id="IPR018753">
    <property type="entry name" value="GapR-like"/>
</dbReference>
<dbReference type="InterPro" id="IPR046367">
    <property type="entry name" value="GapR-like_DNA-bd"/>
</dbReference>
<dbReference type="NCBIfam" id="NF010247">
    <property type="entry name" value="PRK13694.1"/>
    <property type="match status" value="1"/>
</dbReference>
<dbReference type="Pfam" id="PF10073">
    <property type="entry name" value="GapR_DNA-bd"/>
    <property type="match status" value="1"/>
</dbReference>
<name>Y885_RICRS</name>
<comment type="similarity">
    <text evidence="1">Belongs to the UPF0335 family.</text>
</comment>
<sequence>MSEVVIKEQLEQYISKIERLEQEKADLSQEVKDIFQDASSHGFDVKAMKSILKLKKLDKDKLAEQDAMLELYRDTLGI</sequence>
<gene>
    <name type="ordered locus">A1G_00885</name>
</gene>
<protein>
    <recommendedName>
        <fullName evidence="1">UPF0335 protein A1G_00885</fullName>
    </recommendedName>
</protein>
<evidence type="ECO:0000255" key="1">
    <source>
        <dbReference type="HAMAP-Rule" id="MF_00797"/>
    </source>
</evidence>
<organism>
    <name type="scientific">Rickettsia rickettsii (strain Sheila Smith)</name>
    <dbReference type="NCBI Taxonomy" id="392021"/>
    <lineage>
        <taxon>Bacteria</taxon>
        <taxon>Pseudomonadati</taxon>
        <taxon>Pseudomonadota</taxon>
        <taxon>Alphaproteobacteria</taxon>
        <taxon>Rickettsiales</taxon>
        <taxon>Rickettsiaceae</taxon>
        <taxon>Rickettsieae</taxon>
        <taxon>Rickettsia</taxon>
        <taxon>spotted fever group</taxon>
    </lineage>
</organism>
<accession>A8GQT4</accession>